<comment type="function">
    <text evidence="7">Function as phospholipase selectivefor phosphatidylcholine (PubMed:9395408). Implicated as a critical step in numerous cellular pathways, including signal transduction, membrane trafficking, and the regulation of mitosis. May be involved in the regulation of perinuclear intravesicular membrane traffic (PubMed:9395408).</text>
</comment>
<comment type="catalytic activity">
    <reaction evidence="7">
        <text>a 1,2-diacyl-sn-glycero-3-phosphocholine + H2O = a 1,2-diacyl-sn-glycero-3-phosphate + choline + H(+)</text>
        <dbReference type="Rhea" id="RHEA:14445"/>
        <dbReference type="ChEBI" id="CHEBI:15354"/>
        <dbReference type="ChEBI" id="CHEBI:15377"/>
        <dbReference type="ChEBI" id="CHEBI:15378"/>
        <dbReference type="ChEBI" id="CHEBI:57643"/>
        <dbReference type="ChEBI" id="CHEBI:58608"/>
        <dbReference type="EC" id="3.1.4.4"/>
    </reaction>
    <physiologicalReaction direction="left-to-right" evidence="10">
        <dbReference type="Rhea" id="RHEA:14446"/>
    </physiologicalReaction>
</comment>
<comment type="catalytic activity">
    <reaction evidence="3">
        <text>ethanol + a 1,2-diacyl-sn-glycero-3-phosphocholine = 1,2-diacyl-sn-glycero-3-phosphoethanol + choline</text>
        <dbReference type="Rhea" id="RHEA:44868"/>
        <dbReference type="ChEBI" id="CHEBI:15354"/>
        <dbReference type="ChEBI" id="CHEBI:16236"/>
        <dbReference type="ChEBI" id="CHEBI:57643"/>
        <dbReference type="ChEBI" id="CHEBI:84672"/>
    </reaction>
    <physiologicalReaction direction="left-to-right" evidence="3">
        <dbReference type="Rhea" id="RHEA:44869"/>
    </physiologicalReaction>
</comment>
<comment type="catalytic activity">
    <reaction evidence="3">
        <text>1,2-dihexadecanoyl-sn-glycero-3-phosphocholine + H2O = 1,2-dihexadecanoyl-sn-glycero-3-phosphate + choline + H(+)</text>
        <dbReference type="Rhea" id="RHEA:44872"/>
        <dbReference type="ChEBI" id="CHEBI:15354"/>
        <dbReference type="ChEBI" id="CHEBI:15377"/>
        <dbReference type="ChEBI" id="CHEBI:15378"/>
        <dbReference type="ChEBI" id="CHEBI:72859"/>
        <dbReference type="ChEBI" id="CHEBI:72999"/>
    </reaction>
    <physiologicalReaction direction="left-to-right" evidence="3">
        <dbReference type="Rhea" id="RHEA:44873"/>
    </physiologicalReaction>
</comment>
<comment type="activity regulation">
    <text evidence="3">Stimulated by phosphatidylinositol 4,5-bisphosphate and phosphatidylinositol 3,4,5-trisphosphate, activated by the phosphokinase C-alpha, by the ADP-ribosylation factor-1 (ARF-1), and to a lesser extent by GTP-binding proteins: RHO A, RAC-1 and CDC42. Inhibited by oleate.</text>
</comment>
<comment type="subunit">
    <text evidence="3">Interacts with PIP5K1B.</text>
</comment>
<comment type="interaction">
    <interactant intactId="EBI-15566315">
        <id>Q9Z280</id>
    </interactant>
    <interactant intactId="EBI-990067">
        <id>P49769</id>
        <label>Psen1</label>
    </interactant>
    <organismsDiffer>false</organismsDiffer>
    <experiments>2</experiments>
</comment>
<comment type="subcellular location">
    <subcellularLocation>
        <location evidence="7">Cytoplasm</location>
        <location evidence="7">Perinuclear region</location>
    </subcellularLocation>
    <subcellularLocation>
        <location evidence="9">Endoplasmic reticulum membrane</location>
        <topology evidence="9">Lipid-anchor</topology>
        <orientation evidence="9">Cytoplasmic side</orientation>
    </subcellularLocation>
    <subcellularLocation>
        <location evidence="9">Golgi apparatus membrane</location>
        <topology evidence="9">Lipid-anchor</topology>
        <orientation evidence="9">Cytoplasmic side</orientation>
    </subcellularLocation>
    <subcellularLocation>
        <location evidence="9">Late endosome membrane</location>
        <topology evidence="9">Lipid-anchor</topology>
        <orientation evidence="9">Cytoplasmic side</orientation>
    </subcellularLocation>
</comment>
<comment type="alternative products">
    <event type="alternative splicing"/>
    <isoform>
        <id>Q9Z280-1</id>
        <name>PLD1A</name>
        <sequence type="displayed"/>
    </isoform>
    <isoform>
        <id>Q9Z280-2</id>
        <name>PLD1B</name>
        <sequence type="described" ref="VSP_005023"/>
    </isoform>
</comment>
<comment type="tissue specificity">
    <text>Expressed in kidney, lung, and at a much lower levels, in brain, liver, heart, testis and spleen.</text>
</comment>
<comment type="developmental stage">
    <text>Expressed most strikingly in selected ventricular cells lining the spinal cord and brain. The level of expression decreases dramatically as the cells differentiate into neurons and migrate to the outer layer of the spinal cord and brain. Expression is observed during development in a restricted region of the nasal neuroepithelium.</text>
</comment>
<comment type="disease">
    <text>Defects in Pld1 may result in coa which is associated with coat color dilution and white spotting. It is also associated with platelet-storage pool deficiency characterized by decreased levels in serotonin and dense granules.</text>
</comment>
<comment type="similarity">
    <text evidence="9">Belongs to the phospholipase D family.</text>
</comment>
<evidence type="ECO:0000250" key="1"/>
<evidence type="ECO:0000250" key="2">
    <source>
        <dbReference type="UniProtKB" id="P70496"/>
    </source>
</evidence>
<evidence type="ECO:0000250" key="3">
    <source>
        <dbReference type="UniProtKB" id="Q13393"/>
    </source>
</evidence>
<evidence type="ECO:0000255" key="4">
    <source>
        <dbReference type="PROSITE-ProRule" id="PRU00145"/>
    </source>
</evidence>
<evidence type="ECO:0000255" key="5">
    <source>
        <dbReference type="PROSITE-ProRule" id="PRU00147"/>
    </source>
</evidence>
<evidence type="ECO:0000255" key="6">
    <source>
        <dbReference type="PROSITE-ProRule" id="PRU00153"/>
    </source>
</evidence>
<evidence type="ECO:0000269" key="7">
    <source>
    </source>
</evidence>
<evidence type="ECO:0000303" key="8">
    <source>
    </source>
</evidence>
<evidence type="ECO:0000305" key="9"/>
<evidence type="ECO:0000305" key="10">
    <source>
    </source>
</evidence>
<evidence type="ECO:0000312" key="11">
    <source>
        <dbReference type="MGI" id="MGI:109585"/>
    </source>
</evidence>
<dbReference type="EC" id="3.1.4.4" evidence="7"/>
<dbReference type="EMBL" id="U87868">
    <property type="protein sequence ID" value="AAB81245.1"/>
    <property type="molecule type" value="mRNA"/>
</dbReference>
<dbReference type="EMBL" id="AF083497">
    <property type="protein sequence ID" value="AAC84041.1"/>
    <property type="molecule type" value="Genomic_DNA"/>
</dbReference>
<dbReference type="EMBL" id="AF083475">
    <property type="protein sequence ID" value="AAC84041.1"/>
    <property type="status" value="JOINED"/>
    <property type="molecule type" value="Genomic_DNA"/>
</dbReference>
<dbReference type="EMBL" id="AF083476">
    <property type="protein sequence ID" value="AAC84041.1"/>
    <property type="status" value="JOINED"/>
    <property type="molecule type" value="Genomic_DNA"/>
</dbReference>
<dbReference type="EMBL" id="AF083478">
    <property type="protein sequence ID" value="AAC84041.1"/>
    <property type="status" value="JOINED"/>
    <property type="molecule type" value="Genomic_DNA"/>
</dbReference>
<dbReference type="EMBL" id="AF083479">
    <property type="protein sequence ID" value="AAC84041.1"/>
    <property type="status" value="JOINED"/>
    <property type="molecule type" value="Genomic_DNA"/>
</dbReference>
<dbReference type="EMBL" id="AF083480">
    <property type="protein sequence ID" value="AAC84041.1"/>
    <property type="status" value="JOINED"/>
    <property type="molecule type" value="Genomic_DNA"/>
</dbReference>
<dbReference type="EMBL" id="AF083481">
    <property type="protein sequence ID" value="AAC84041.1"/>
    <property type="status" value="JOINED"/>
    <property type="molecule type" value="Genomic_DNA"/>
</dbReference>
<dbReference type="EMBL" id="AF083483">
    <property type="protein sequence ID" value="AAC84041.1"/>
    <property type="status" value="JOINED"/>
    <property type="molecule type" value="Genomic_DNA"/>
</dbReference>
<dbReference type="EMBL" id="AF083484">
    <property type="protein sequence ID" value="AAC84041.1"/>
    <property type="status" value="JOINED"/>
    <property type="molecule type" value="Genomic_DNA"/>
</dbReference>
<dbReference type="EMBL" id="AF083485">
    <property type="protein sequence ID" value="AAC84041.1"/>
    <property type="status" value="JOINED"/>
    <property type="molecule type" value="Genomic_DNA"/>
</dbReference>
<dbReference type="EMBL" id="AF083486">
    <property type="protein sequence ID" value="AAC84041.1"/>
    <property type="status" value="JOINED"/>
    <property type="molecule type" value="Genomic_DNA"/>
</dbReference>
<dbReference type="EMBL" id="AF083488">
    <property type="protein sequence ID" value="AAC84041.1"/>
    <property type="status" value="JOINED"/>
    <property type="molecule type" value="Genomic_DNA"/>
</dbReference>
<dbReference type="EMBL" id="AF083489">
    <property type="protein sequence ID" value="AAC84041.1"/>
    <property type="status" value="JOINED"/>
    <property type="molecule type" value="Genomic_DNA"/>
</dbReference>
<dbReference type="EMBL" id="AF083490">
    <property type="protein sequence ID" value="AAC84041.1"/>
    <property type="status" value="JOINED"/>
    <property type="molecule type" value="Genomic_DNA"/>
</dbReference>
<dbReference type="EMBL" id="AF083492">
    <property type="protein sequence ID" value="AAC84041.1"/>
    <property type="status" value="JOINED"/>
    <property type="molecule type" value="Genomic_DNA"/>
</dbReference>
<dbReference type="EMBL" id="AF083494">
    <property type="protein sequence ID" value="AAC84041.1"/>
    <property type="status" value="JOINED"/>
    <property type="molecule type" value="Genomic_DNA"/>
</dbReference>
<dbReference type="EMBL" id="AF083495">
    <property type="protein sequence ID" value="AAC84041.1"/>
    <property type="status" value="JOINED"/>
    <property type="molecule type" value="Genomic_DNA"/>
</dbReference>
<dbReference type="EMBL" id="AF083496">
    <property type="protein sequence ID" value="AAC84041.1"/>
    <property type="status" value="JOINED"/>
    <property type="molecule type" value="Genomic_DNA"/>
</dbReference>
<dbReference type="CCDS" id="CCDS17275.1">
    <molecule id="Q9Z280-2"/>
</dbReference>
<dbReference type="CCDS" id="CCDS89617.1">
    <molecule id="Q9Z280-1"/>
</dbReference>
<dbReference type="PIR" id="T17203">
    <property type="entry name" value="T17203"/>
</dbReference>
<dbReference type="PIR" id="T42093">
    <property type="entry name" value="T42093"/>
</dbReference>
<dbReference type="SMR" id="Q9Z280"/>
<dbReference type="DIP" id="DIP-61103N"/>
<dbReference type="FunCoup" id="Q9Z280">
    <property type="interactions" value="704"/>
</dbReference>
<dbReference type="IntAct" id="Q9Z280">
    <property type="interactions" value="1"/>
</dbReference>
<dbReference type="STRING" id="10090.ENSMUSP00000113810"/>
<dbReference type="ChEMBL" id="CHEMBL3309054"/>
<dbReference type="GlyGen" id="Q9Z280">
    <property type="glycosylation" value="1 site, 1 O-linked glycan (1 site)"/>
</dbReference>
<dbReference type="iPTMnet" id="Q9Z280"/>
<dbReference type="PhosphoSitePlus" id="Q9Z280"/>
<dbReference type="SwissPalm" id="Q9Z280"/>
<dbReference type="PaxDb" id="10090-ENSMUSP00000113810"/>
<dbReference type="ProteomicsDB" id="289542">
    <molecule id="Q9Z280-1"/>
</dbReference>
<dbReference type="ProteomicsDB" id="289543">
    <molecule id="Q9Z280-2"/>
</dbReference>
<dbReference type="AGR" id="MGI:109585"/>
<dbReference type="MGI" id="MGI:109585">
    <property type="gene designation" value="Pld1"/>
</dbReference>
<dbReference type="eggNOG" id="KOG1329">
    <property type="taxonomic scope" value="Eukaryota"/>
</dbReference>
<dbReference type="InParanoid" id="Q9Z280"/>
<dbReference type="OrthoDB" id="14911at2759"/>
<dbReference type="PhylomeDB" id="Q9Z280"/>
<dbReference type="BRENDA" id="3.1.4.4">
    <property type="organism ID" value="3474"/>
</dbReference>
<dbReference type="Reactome" id="R-MMU-1483166">
    <property type="pathway name" value="Synthesis of PA"/>
</dbReference>
<dbReference type="Reactome" id="R-MMU-2029485">
    <property type="pathway name" value="Role of phospholipids in phagocytosis"/>
</dbReference>
<dbReference type="Reactome" id="R-MMU-6798695">
    <property type="pathway name" value="Neutrophil degranulation"/>
</dbReference>
<dbReference type="Reactome" id="R-MMU-8980692">
    <property type="pathway name" value="RHOA GTPase cycle"/>
</dbReference>
<dbReference type="Reactome" id="R-MMU-9013149">
    <property type="pathway name" value="RAC1 GTPase cycle"/>
</dbReference>
<dbReference type="Reactome" id="R-MMU-9013408">
    <property type="pathway name" value="RHOG GTPase cycle"/>
</dbReference>
<dbReference type="ChiTaRS" id="Pld1">
    <property type="organism name" value="mouse"/>
</dbReference>
<dbReference type="PRO" id="PR:Q9Z280"/>
<dbReference type="Proteomes" id="UP000000589">
    <property type="component" value="Unplaced"/>
</dbReference>
<dbReference type="RNAct" id="Q9Z280">
    <property type="molecule type" value="protein"/>
</dbReference>
<dbReference type="GO" id="GO:0005789">
    <property type="term" value="C:endoplasmic reticulum membrane"/>
    <property type="evidence" value="ECO:0000304"/>
    <property type="project" value="Reactome"/>
</dbReference>
<dbReference type="GO" id="GO:0005768">
    <property type="term" value="C:endosome"/>
    <property type="evidence" value="ECO:0000266"/>
    <property type="project" value="MGI"/>
</dbReference>
<dbReference type="GO" id="GO:0005794">
    <property type="term" value="C:Golgi apparatus"/>
    <property type="evidence" value="ECO:0000266"/>
    <property type="project" value="MGI"/>
</dbReference>
<dbReference type="GO" id="GO:0000139">
    <property type="term" value="C:Golgi membrane"/>
    <property type="evidence" value="ECO:0007669"/>
    <property type="project" value="UniProtKB-SubCell"/>
</dbReference>
<dbReference type="GO" id="GO:0031902">
    <property type="term" value="C:late endosome membrane"/>
    <property type="evidence" value="ECO:0007669"/>
    <property type="project" value="UniProtKB-SubCell"/>
</dbReference>
<dbReference type="GO" id="GO:0048471">
    <property type="term" value="C:perinuclear region of cytoplasm"/>
    <property type="evidence" value="ECO:0007669"/>
    <property type="project" value="UniProtKB-SubCell"/>
</dbReference>
<dbReference type="GO" id="GO:0035091">
    <property type="term" value="F:phosphatidylinositol binding"/>
    <property type="evidence" value="ECO:0007669"/>
    <property type="project" value="InterPro"/>
</dbReference>
<dbReference type="GO" id="GO:0004630">
    <property type="term" value="F:phospholipase D activity"/>
    <property type="evidence" value="ECO:0000304"/>
    <property type="project" value="Reactome"/>
</dbReference>
<dbReference type="GO" id="GO:0050830">
    <property type="term" value="P:defense response to Gram-positive bacterium"/>
    <property type="evidence" value="ECO:0000315"/>
    <property type="project" value="MGI"/>
</dbReference>
<dbReference type="GO" id="GO:0035556">
    <property type="term" value="P:intracellular signal transduction"/>
    <property type="evidence" value="ECO:0007669"/>
    <property type="project" value="InterPro"/>
</dbReference>
<dbReference type="GO" id="GO:0016042">
    <property type="term" value="P:lipid catabolic process"/>
    <property type="evidence" value="ECO:0007669"/>
    <property type="project" value="UniProtKB-KW"/>
</dbReference>
<dbReference type="GO" id="GO:0006654">
    <property type="term" value="P:phosphatidic acid biosynthetic process"/>
    <property type="evidence" value="ECO:0000266"/>
    <property type="project" value="MGI"/>
</dbReference>
<dbReference type="GO" id="GO:0008654">
    <property type="term" value="P:phospholipid biosynthetic process"/>
    <property type="evidence" value="ECO:0000266"/>
    <property type="project" value="MGI"/>
</dbReference>
<dbReference type="CDD" id="cd01254">
    <property type="entry name" value="PH_PLD"/>
    <property type="match status" value="1"/>
</dbReference>
<dbReference type="CDD" id="cd09842">
    <property type="entry name" value="PLDc_vPLD1_1"/>
    <property type="match status" value="1"/>
</dbReference>
<dbReference type="CDD" id="cd09844">
    <property type="entry name" value="PLDc_vPLD1_2"/>
    <property type="match status" value="1"/>
</dbReference>
<dbReference type="CDD" id="cd07296">
    <property type="entry name" value="PX_PLD1"/>
    <property type="match status" value="1"/>
</dbReference>
<dbReference type="FunFam" id="2.30.29.30:FF:000114">
    <property type="entry name" value="Phospholipase"/>
    <property type="match status" value="1"/>
</dbReference>
<dbReference type="FunFam" id="3.30.1520.10:FF:000021">
    <property type="entry name" value="Phospholipase"/>
    <property type="match status" value="1"/>
</dbReference>
<dbReference type="FunFam" id="3.30.870.10:FF:000005">
    <property type="entry name" value="Phospholipase"/>
    <property type="match status" value="1"/>
</dbReference>
<dbReference type="FunFam" id="3.30.870.10:FF:000009">
    <property type="entry name" value="Phospholipase"/>
    <property type="match status" value="1"/>
</dbReference>
<dbReference type="FunFam" id="3.30.870.10:FF:000018">
    <property type="entry name" value="Phospholipase"/>
    <property type="match status" value="1"/>
</dbReference>
<dbReference type="Gene3D" id="3.30.870.10">
    <property type="entry name" value="Endonuclease Chain A"/>
    <property type="match status" value="3"/>
</dbReference>
<dbReference type="Gene3D" id="3.30.1520.10">
    <property type="entry name" value="Phox-like domain"/>
    <property type="match status" value="1"/>
</dbReference>
<dbReference type="Gene3D" id="2.30.29.30">
    <property type="entry name" value="Pleckstrin-homology domain (PH domain)/Phosphotyrosine-binding domain (PTB)"/>
    <property type="match status" value="1"/>
</dbReference>
<dbReference type="InterPro" id="IPR011993">
    <property type="entry name" value="PH-like_dom_sf"/>
</dbReference>
<dbReference type="InterPro" id="IPR001849">
    <property type="entry name" value="PH_domain"/>
</dbReference>
<dbReference type="InterPro" id="IPR025202">
    <property type="entry name" value="PLD-like_dom"/>
</dbReference>
<dbReference type="InterPro" id="IPR001736">
    <property type="entry name" value="PLipase_D/transphosphatidylase"/>
</dbReference>
<dbReference type="InterPro" id="IPR016555">
    <property type="entry name" value="PLipase_D_euk"/>
</dbReference>
<dbReference type="InterPro" id="IPR015679">
    <property type="entry name" value="PLipase_D_fam"/>
</dbReference>
<dbReference type="InterPro" id="IPR001683">
    <property type="entry name" value="PX_dom"/>
</dbReference>
<dbReference type="InterPro" id="IPR036871">
    <property type="entry name" value="PX_dom_sf"/>
</dbReference>
<dbReference type="PANTHER" id="PTHR18896">
    <property type="entry name" value="PHOSPHOLIPASE D"/>
    <property type="match status" value="1"/>
</dbReference>
<dbReference type="PANTHER" id="PTHR18896:SF57">
    <property type="entry name" value="PHOSPHOLIPASE D1"/>
    <property type="match status" value="1"/>
</dbReference>
<dbReference type="Pfam" id="PF00169">
    <property type="entry name" value="PH"/>
    <property type="match status" value="1"/>
</dbReference>
<dbReference type="Pfam" id="PF00614">
    <property type="entry name" value="PLDc"/>
    <property type="match status" value="1"/>
</dbReference>
<dbReference type="Pfam" id="PF13091">
    <property type="entry name" value="PLDc_2"/>
    <property type="match status" value="1"/>
</dbReference>
<dbReference type="Pfam" id="PF00787">
    <property type="entry name" value="PX"/>
    <property type="match status" value="1"/>
</dbReference>
<dbReference type="PIRSF" id="PIRSF009376">
    <property type="entry name" value="Phospholipase_D_euk"/>
    <property type="match status" value="1"/>
</dbReference>
<dbReference type="SMART" id="SM00233">
    <property type="entry name" value="PH"/>
    <property type="match status" value="1"/>
</dbReference>
<dbReference type="SMART" id="SM00155">
    <property type="entry name" value="PLDc"/>
    <property type="match status" value="2"/>
</dbReference>
<dbReference type="SMART" id="SM00312">
    <property type="entry name" value="PX"/>
    <property type="match status" value="1"/>
</dbReference>
<dbReference type="SUPFAM" id="SSF50729">
    <property type="entry name" value="PH domain-like"/>
    <property type="match status" value="1"/>
</dbReference>
<dbReference type="SUPFAM" id="SSF56024">
    <property type="entry name" value="Phospholipase D/nuclease"/>
    <property type="match status" value="3"/>
</dbReference>
<dbReference type="SUPFAM" id="SSF64268">
    <property type="entry name" value="PX domain"/>
    <property type="match status" value="1"/>
</dbReference>
<dbReference type="PROSITE" id="PS50003">
    <property type="entry name" value="PH_DOMAIN"/>
    <property type="match status" value="1"/>
</dbReference>
<dbReference type="PROSITE" id="PS50035">
    <property type="entry name" value="PLD"/>
    <property type="match status" value="2"/>
</dbReference>
<dbReference type="PROSITE" id="PS50195">
    <property type="entry name" value="PX"/>
    <property type="match status" value="1"/>
</dbReference>
<sequence length="1074" mass="123969">MSLKSETRVNTSTLQKIAADMSNLIENLDTRELHFEGEEVEYDASPGDPKAQEGCIPFSSIYNTQGFKEPNIQTYLSGCPIKAQVLEVERFTSTSRVPSINLYTIELTHGEFTWQVKRKFKHFQEFHRELLKYKAFIRIPIPTKRHTFRRQNVKEEPREMPSLPRSSENAIQEEQFFGRRKQLEDYLTKILKMPMYRNYHATTEFLDVSQLSFIHDLGPKGLEGMIMKRSGGHRIPGVNCCGHGRACYRWSKRWLIVKDSFLLYMKPDSGAIAFVLLVDKEFRVKVGRKETETKYGLRIDNLSRTLILKCNSYRHARWWGGAIEEFIRKHGADFLKDHRFGSYAALHENTLAKWYVNAKGYFEDIANAMEEASEEIFITDWWLSPEIFLKRPVVEGNRWRLDCILKRKAQQGVRIFIMLYKEVELALGINSEYSKRTLMRLHPNIKVMRHPDHVSSSVYLWAHHEKLVIIDQSVAFVGGIDLAYGRWDDNEHRLTDVGSVKRVTSGLSLGSLTAASVESMESLSLKDKHEFHKKEPISKIVDETDMKLKGIGKSRKFSKFSLYRQLHRHHLHNADSISSIDSTSSYFSHCRSHQNLIHGLKPHLKLFHPSSESEQGLTRHSTDTGSIRSVQTGVGELHGETRFWHGKDYCNFVFKDWVQLDKPFADFIDRYSTPRMPWHDIGSVVHGKAARDVARHFIQRWNFTKIMKPKYRSLSYPFLLPKSQATAHELRYQVPGAVPAKVQLLRSAADWSAGIKHHEESIHAAYIHVIENSKHYIYIENQFFISCADDKVVFNKVGDRIAQRILKAHREGQRYRVYIVIPLLPGFEGDISTGGGNALQAIMHFNYRTMCRGESSILEQLKPELGNKWINYISFCGLRTHAELEGNLVTELIYVHSKLLIADDNTVIIGSANINDRSMLGKRDSEMAVIVQDTETVPSVMDGKEYQAGRFARDLRLECFRLVLGYLSDPSEDLQDPVSDKFFKEIWVSTAARNATIYDKVFRCLPNDEVHNLIQLRDFINKPILAKEDALRAEEELRKIRGFLVQFPLYFLSEENLLPSVGTKEAIVPMEVWT</sequence>
<reference key="1">
    <citation type="journal article" date="1997" name="Biochem. J.">
        <title>Cloning and expression analysis of murine phospholipase D1.</title>
        <authorList>
            <person name="Colley W.C."/>
            <person name="Altshuller Y.M."/>
            <person name="Sue-Ling C.K."/>
            <person name="Copeland N.G."/>
            <person name="Gilbert D.J."/>
            <person name="Jenkins N.A."/>
            <person name="Branch K.D."/>
            <person name="Tsirka S.E."/>
            <person name="Bollag R.J."/>
            <person name="Bollag W.B."/>
            <person name="Frohman M.A."/>
        </authorList>
    </citation>
    <scope>NUCLEOTIDE SEQUENCE [MRNA] (ISOFORMS PLD1A AND PLD1B)</scope>
    <source>
        <strain>129</strain>
        <tissue>Embryonic brain</tissue>
        <tissue>Neonatal brain</tissue>
    </source>
</reference>
<reference key="2">
    <citation type="journal article" date="1998" name="Gene">
        <title>Genomic analysis of murine phospholipase D1 and comparison to phospholipase D2 reveals an unusual difference in gene size.</title>
        <authorList>
            <person name="Redina O.E."/>
            <person name="Frohman M.A."/>
        </authorList>
    </citation>
    <scope>NUCLEOTIDE SEQUENCE [GENOMIC DNA] (ISOFORM PLD1A)</scope>
    <source>
        <strain>129</strain>
    </source>
</reference>
<reference key="3">
    <citation type="journal article" date="1997" name="Curr. Biol.">
        <title>Phospholipase D2, a distinct phospholipase D isoform with novel regulatory properties that provokes cytoskeletal reorganization.</title>
        <authorList>
            <person name="Colley W.C."/>
            <person name="Sung T.-C."/>
            <person name="Roll R."/>
            <person name="Jenco J.M."/>
            <person name="Hammond S.M."/>
            <person name="Altshuller Y.M."/>
            <person name="Bar-Sagi D."/>
            <person name="Morris A.J."/>
            <person name="Frohman M.A."/>
        </authorList>
    </citation>
    <scope>SUBCELLULAR LOCATION</scope>
    <scope>FUNCTION</scope>
    <scope>CATALYTIC ACTIVITY</scope>
</reference>
<protein>
    <recommendedName>
        <fullName evidence="9">Phospholipase D1</fullName>
        <shortName>PLD 1</shortName>
        <shortName>mPLD1</shortName>
        <ecNumber evidence="7">3.1.4.4</ecNumber>
    </recommendedName>
    <alternativeName>
        <fullName>Choline phosphatase 1</fullName>
    </alternativeName>
    <alternativeName>
        <fullName>Phosphatidylcholine-hydrolyzing phospholipase D1</fullName>
    </alternativeName>
</protein>
<accession>Q9Z280</accession>
<accession>O35911</accession>
<proteinExistence type="evidence at protein level"/>
<feature type="chain" id="PRO_0000218803" description="Phospholipase D1">
    <location>
        <begin position="1"/>
        <end position="1074"/>
    </location>
</feature>
<feature type="domain" description="PX" evidence="5">
    <location>
        <begin position="81"/>
        <end position="212"/>
    </location>
</feature>
<feature type="domain" description="PH" evidence="4">
    <location>
        <begin position="219"/>
        <end position="328"/>
    </location>
</feature>
<feature type="domain" description="PLD phosphodiesterase 1" evidence="6">
    <location>
        <begin position="459"/>
        <end position="486"/>
    </location>
</feature>
<feature type="domain" description="PLD phosphodiesterase 2" evidence="6">
    <location>
        <begin position="891"/>
        <end position="918"/>
    </location>
</feature>
<feature type="region of interest" description="Catalytic">
    <location>
        <begin position="463"/>
        <end position="928"/>
    </location>
</feature>
<feature type="modified residue" description="Phosphoserine" evidence="2">
    <location>
        <position position="499"/>
    </location>
</feature>
<feature type="modified residue" description="Phosphoserine" evidence="3">
    <location>
        <position position="561"/>
    </location>
</feature>
<feature type="modified residue" description="Phosphoserine" evidence="3">
    <location>
        <position position="629"/>
    </location>
</feature>
<feature type="lipid moiety-binding region" description="S-palmitoyl cysteine" evidence="1">
    <location>
        <position position="240"/>
    </location>
</feature>
<feature type="lipid moiety-binding region" description="S-palmitoyl cysteine" evidence="1">
    <location>
        <position position="241"/>
    </location>
</feature>
<feature type="splice variant" id="VSP_005023" description="In isoform PLD1B." evidence="8">
    <original>SYFSHCRSHQNLIHGLKPHLKLFHPSSESEQGLTRHSTD</original>
    <variation>N</variation>
    <location>
        <begin position="585"/>
        <end position="623"/>
    </location>
</feature>
<feature type="sequence conflict" description="In Ref. 1; AAB81245." evidence="9" ref="1">
    <original>NIQT</original>
    <variation>QHPD</variation>
    <location>
        <begin position="71"/>
        <end position="74"/>
    </location>
</feature>
<feature type="sequence conflict" description="In Ref. 1; AAB81245." evidence="9" ref="1">
    <original>A</original>
    <variation>V</variation>
    <location>
        <position position="574"/>
    </location>
</feature>
<feature type="sequence conflict" description="In Ref. 1; AAB81245." evidence="9" ref="1">
    <original>R</original>
    <variation>G</variation>
    <location>
        <position position="675"/>
    </location>
</feature>
<feature type="sequence conflict" description="In Ref. 1; AAB81245." evidence="9" ref="1">
    <original>N</original>
    <variation>I</variation>
    <location>
        <position position="781"/>
    </location>
</feature>
<feature type="sequence conflict" description="In Ref. 1; AAB81245." evidence="9" ref="1">
    <original>C</original>
    <variation>V</variation>
    <location>
        <position position="876"/>
    </location>
</feature>
<feature type="sequence conflict" description="In Ref. 1; AAB81245." evidence="9" ref="1">
    <original>T</original>
    <variation>A</variation>
    <location>
        <position position="990"/>
    </location>
</feature>
<feature type="sequence conflict" description="In Ref. 1." evidence="9" ref="1">
    <original>EVW</original>
    <variation>SLT</variation>
    <location>
        <begin position="1071"/>
        <end position="1073"/>
    </location>
</feature>
<organism>
    <name type="scientific">Mus musculus</name>
    <name type="common">Mouse</name>
    <dbReference type="NCBI Taxonomy" id="10090"/>
    <lineage>
        <taxon>Eukaryota</taxon>
        <taxon>Metazoa</taxon>
        <taxon>Chordata</taxon>
        <taxon>Craniata</taxon>
        <taxon>Vertebrata</taxon>
        <taxon>Euteleostomi</taxon>
        <taxon>Mammalia</taxon>
        <taxon>Eutheria</taxon>
        <taxon>Euarchontoglires</taxon>
        <taxon>Glires</taxon>
        <taxon>Rodentia</taxon>
        <taxon>Myomorpha</taxon>
        <taxon>Muroidea</taxon>
        <taxon>Muridae</taxon>
        <taxon>Murinae</taxon>
        <taxon>Mus</taxon>
        <taxon>Mus</taxon>
    </lineage>
</organism>
<gene>
    <name evidence="11" type="primary">Pld1</name>
</gene>
<keyword id="KW-0025">Alternative splicing</keyword>
<keyword id="KW-0963">Cytoplasm</keyword>
<keyword id="KW-0256">Endoplasmic reticulum</keyword>
<keyword id="KW-0967">Endosome</keyword>
<keyword id="KW-0333">Golgi apparatus</keyword>
<keyword id="KW-0378">Hydrolase</keyword>
<keyword id="KW-0442">Lipid degradation</keyword>
<keyword id="KW-0443">Lipid metabolism</keyword>
<keyword id="KW-0449">Lipoprotein</keyword>
<keyword id="KW-0472">Membrane</keyword>
<keyword id="KW-0564">Palmitate</keyword>
<keyword id="KW-0597">Phosphoprotein</keyword>
<keyword id="KW-1185">Reference proteome</keyword>
<keyword id="KW-0677">Repeat</keyword>
<name>PLD1_MOUSE</name>